<feature type="chain" id="PRO_1000047719" description="Aminomethyltransferase">
    <location>
        <begin position="1"/>
        <end position="372"/>
    </location>
</feature>
<organism>
    <name type="scientific">Synechococcus elongatus (strain ATCC 33912 / PCC 7942 / FACHB-805)</name>
    <name type="common">Anacystis nidulans R2</name>
    <dbReference type="NCBI Taxonomy" id="1140"/>
    <lineage>
        <taxon>Bacteria</taxon>
        <taxon>Bacillati</taxon>
        <taxon>Cyanobacteriota</taxon>
        <taxon>Cyanophyceae</taxon>
        <taxon>Synechococcales</taxon>
        <taxon>Synechococcaceae</taxon>
        <taxon>Synechococcus</taxon>
    </lineage>
</organism>
<protein>
    <recommendedName>
        <fullName evidence="1">Aminomethyltransferase</fullName>
        <ecNumber evidence="1">2.1.2.10</ecNumber>
    </recommendedName>
    <alternativeName>
        <fullName evidence="1">Glycine cleavage system T protein</fullName>
    </alternativeName>
</protein>
<dbReference type="EC" id="2.1.2.10" evidence="1"/>
<dbReference type="EMBL" id="CP000100">
    <property type="protein sequence ID" value="ABB58338.1"/>
    <property type="molecule type" value="Genomic_DNA"/>
</dbReference>
<dbReference type="RefSeq" id="WP_011244104.1">
    <property type="nucleotide sequence ID" value="NZ_JACJTX010000001.1"/>
</dbReference>
<dbReference type="SMR" id="Q31KT1"/>
<dbReference type="STRING" id="1140.Synpcc7942_2308"/>
<dbReference type="PaxDb" id="1140-Synpcc7942_2308"/>
<dbReference type="GeneID" id="72431194"/>
<dbReference type="KEGG" id="syf:Synpcc7942_2308"/>
<dbReference type="eggNOG" id="COG0404">
    <property type="taxonomic scope" value="Bacteria"/>
</dbReference>
<dbReference type="HOGENOM" id="CLU_007884_10_2_3"/>
<dbReference type="OrthoDB" id="9774591at2"/>
<dbReference type="BioCyc" id="SYNEL:SYNPCC7942_2308-MONOMER"/>
<dbReference type="Proteomes" id="UP000889800">
    <property type="component" value="Chromosome"/>
</dbReference>
<dbReference type="GO" id="GO:0005829">
    <property type="term" value="C:cytosol"/>
    <property type="evidence" value="ECO:0007669"/>
    <property type="project" value="TreeGrafter"/>
</dbReference>
<dbReference type="GO" id="GO:0005960">
    <property type="term" value="C:glycine cleavage complex"/>
    <property type="evidence" value="ECO:0007669"/>
    <property type="project" value="InterPro"/>
</dbReference>
<dbReference type="GO" id="GO:0004047">
    <property type="term" value="F:aminomethyltransferase activity"/>
    <property type="evidence" value="ECO:0007669"/>
    <property type="project" value="UniProtKB-UniRule"/>
</dbReference>
<dbReference type="GO" id="GO:0008483">
    <property type="term" value="F:transaminase activity"/>
    <property type="evidence" value="ECO:0007669"/>
    <property type="project" value="UniProtKB-KW"/>
</dbReference>
<dbReference type="GO" id="GO:0019464">
    <property type="term" value="P:glycine decarboxylation via glycine cleavage system"/>
    <property type="evidence" value="ECO:0007669"/>
    <property type="project" value="UniProtKB-UniRule"/>
</dbReference>
<dbReference type="FunFam" id="2.40.30.110:FF:000003">
    <property type="entry name" value="Aminomethyltransferase"/>
    <property type="match status" value="1"/>
</dbReference>
<dbReference type="FunFam" id="4.10.1250.10:FF:000001">
    <property type="entry name" value="Aminomethyltransferase"/>
    <property type="match status" value="1"/>
</dbReference>
<dbReference type="Gene3D" id="2.40.30.110">
    <property type="entry name" value="Aminomethyltransferase beta-barrel domains"/>
    <property type="match status" value="1"/>
</dbReference>
<dbReference type="Gene3D" id="3.30.70.1400">
    <property type="entry name" value="Aminomethyltransferase beta-barrel domains"/>
    <property type="match status" value="1"/>
</dbReference>
<dbReference type="Gene3D" id="4.10.1250.10">
    <property type="entry name" value="Aminomethyltransferase fragment"/>
    <property type="match status" value="1"/>
</dbReference>
<dbReference type="Gene3D" id="3.30.1360.120">
    <property type="entry name" value="Probable tRNA modification gtpase trme, domain 1"/>
    <property type="match status" value="1"/>
</dbReference>
<dbReference type="HAMAP" id="MF_00259">
    <property type="entry name" value="GcvT"/>
    <property type="match status" value="1"/>
</dbReference>
<dbReference type="InterPro" id="IPR006223">
    <property type="entry name" value="GCS_T"/>
</dbReference>
<dbReference type="InterPro" id="IPR022903">
    <property type="entry name" value="GCS_T_bac"/>
</dbReference>
<dbReference type="InterPro" id="IPR013977">
    <property type="entry name" value="GCST_C"/>
</dbReference>
<dbReference type="InterPro" id="IPR006222">
    <property type="entry name" value="GCV_T_N"/>
</dbReference>
<dbReference type="InterPro" id="IPR028896">
    <property type="entry name" value="GcvT/YgfZ/DmdA"/>
</dbReference>
<dbReference type="InterPro" id="IPR029043">
    <property type="entry name" value="GcvT/YgfZ_C"/>
</dbReference>
<dbReference type="InterPro" id="IPR027266">
    <property type="entry name" value="TrmE/GcvT_dom1"/>
</dbReference>
<dbReference type="NCBIfam" id="TIGR00528">
    <property type="entry name" value="gcvT"/>
    <property type="match status" value="1"/>
</dbReference>
<dbReference type="NCBIfam" id="NF001567">
    <property type="entry name" value="PRK00389.1"/>
    <property type="match status" value="1"/>
</dbReference>
<dbReference type="PANTHER" id="PTHR43757">
    <property type="entry name" value="AMINOMETHYLTRANSFERASE"/>
    <property type="match status" value="1"/>
</dbReference>
<dbReference type="PANTHER" id="PTHR43757:SF2">
    <property type="entry name" value="AMINOMETHYLTRANSFERASE, MITOCHONDRIAL"/>
    <property type="match status" value="1"/>
</dbReference>
<dbReference type="Pfam" id="PF01571">
    <property type="entry name" value="GCV_T"/>
    <property type="match status" value="1"/>
</dbReference>
<dbReference type="Pfam" id="PF08669">
    <property type="entry name" value="GCV_T_C"/>
    <property type="match status" value="1"/>
</dbReference>
<dbReference type="PIRSF" id="PIRSF006487">
    <property type="entry name" value="GcvT"/>
    <property type="match status" value="1"/>
</dbReference>
<dbReference type="SUPFAM" id="SSF101790">
    <property type="entry name" value="Aminomethyltransferase beta-barrel domain"/>
    <property type="match status" value="1"/>
</dbReference>
<dbReference type="SUPFAM" id="SSF103025">
    <property type="entry name" value="Folate-binding domain"/>
    <property type="match status" value="1"/>
</dbReference>
<comment type="function">
    <text evidence="1">The glycine cleavage system catalyzes the degradation of glycine.</text>
</comment>
<comment type="catalytic activity">
    <reaction evidence="1">
        <text>N(6)-[(R)-S(8)-aminomethyldihydrolipoyl]-L-lysyl-[protein] + (6S)-5,6,7,8-tetrahydrofolate = N(6)-[(R)-dihydrolipoyl]-L-lysyl-[protein] + (6R)-5,10-methylene-5,6,7,8-tetrahydrofolate + NH4(+)</text>
        <dbReference type="Rhea" id="RHEA:16945"/>
        <dbReference type="Rhea" id="RHEA-COMP:10475"/>
        <dbReference type="Rhea" id="RHEA-COMP:10492"/>
        <dbReference type="ChEBI" id="CHEBI:15636"/>
        <dbReference type="ChEBI" id="CHEBI:28938"/>
        <dbReference type="ChEBI" id="CHEBI:57453"/>
        <dbReference type="ChEBI" id="CHEBI:83100"/>
        <dbReference type="ChEBI" id="CHEBI:83143"/>
        <dbReference type="EC" id="2.1.2.10"/>
    </reaction>
</comment>
<comment type="subunit">
    <text evidence="1">The glycine cleavage system is composed of four proteins: P, T, L and H.</text>
</comment>
<comment type="similarity">
    <text evidence="1">Belongs to the GcvT family.</text>
</comment>
<keyword id="KW-0032">Aminotransferase</keyword>
<keyword id="KW-1185">Reference proteome</keyword>
<keyword id="KW-0808">Transferase</keyword>
<gene>
    <name evidence="1" type="primary">gcvT</name>
    <name type="ordered locus">Synpcc7942_2308</name>
</gene>
<proteinExistence type="inferred from homology"/>
<reference key="1">
    <citation type="submission" date="2005-08" db="EMBL/GenBank/DDBJ databases">
        <title>Complete sequence of chromosome 1 of Synechococcus elongatus PCC 7942.</title>
        <authorList>
            <consortium name="US DOE Joint Genome Institute"/>
            <person name="Copeland A."/>
            <person name="Lucas S."/>
            <person name="Lapidus A."/>
            <person name="Barry K."/>
            <person name="Detter J.C."/>
            <person name="Glavina T."/>
            <person name="Hammon N."/>
            <person name="Israni S."/>
            <person name="Pitluck S."/>
            <person name="Schmutz J."/>
            <person name="Larimer F."/>
            <person name="Land M."/>
            <person name="Kyrpides N."/>
            <person name="Lykidis A."/>
            <person name="Golden S."/>
            <person name="Richardson P."/>
        </authorList>
    </citation>
    <scope>NUCLEOTIDE SEQUENCE [LARGE SCALE GENOMIC DNA]</scope>
    <source>
        <strain>ATCC 33912 / PCC 7942 / FACHB-805</strain>
    </source>
</reference>
<evidence type="ECO:0000255" key="1">
    <source>
        <dbReference type="HAMAP-Rule" id="MF_00259"/>
    </source>
</evidence>
<accession>Q31KT1</accession>
<name>GCST_SYNE7</name>
<sequence>MTLTVTVSLLSSPLHSVCTSAGARFTGFAGWELPLQFQGLMQEHLAVRERAGLFDISHMGKFQLRGSGLRAALQRLLPSDLTTLLPGQAQYSVLLNEAGGCLDDLIVYWQGIVDGVEQAFLIVNAATTDSDRLWLTEHLPPAIALLDLSQDLALVAIQGPQAIAFLQPLVSCDLAELPRFSHTVTSIAGQPAFVARTGYTGEDGCEVMLPPAAAITLWQQLTAAGVVPCGLGARDTLRLEAAMPLYGHELDTDTNPLEAGLGWVVHLDRNPDFLGRDRLVQAKTNGLERRLVGLELPGRNIARHGYPVAIADTTVGIVTSGSWSPTLSKAIALAYVPPALANLGQELWVEIRGKQVPATVVKRPFYRGSQFR</sequence>